<feature type="chain" id="PRO_0000292249" description="Photosystem II reaction center protein J">
    <location>
        <begin position="1"/>
        <end position="40"/>
    </location>
</feature>
<feature type="transmembrane region" description="Helical" evidence="1">
    <location>
        <begin position="8"/>
        <end position="28"/>
    </location>
</feature>
<comment type="function">
    <text evidence="1">One of the components of the core complex of photosystem II (PSII). PSII is a light-driven water:plastoquinone oxidoreductase that uses light energy to abstract electrons from H(2)O, generating O(2) and a proton gradient subsequently used for ATP formation. It consists of a core antenna complex that captures photons, and an electron transfer chain that converts photonic excitation into a charge separation.</text>
</comment>
<comment type="subunit">
    <text evidence="1">PSII is composed of 1 copy each of membrane proteins PsbA, PsbB, PsbC, PsbD, PsbE, PsbF, PsbH, PsbI, PsbJ, PsbK, PsbL, PsbM, PsbT, PsbX, PsbY, PsbZ, Psb30/Ycf12, at least 3 peripheral proteins of the oxygen-evolving complex and a large number of cofactors. It forms dimeric complexes.</text>
</comment>
<comment type="subcellular location">
    <subcellularLocation>
        <location evidence="1">Plastid</location>
        <location evidence="1">Chloroplast thylakoid membrane</location>
        <topology evidence="1">Single-pass membrane protein</topology>
    </subcellularLocation>
</comment>
<comment type="similarity">
    <text evidence="1">Belongs to the PsbJ family.</text>
</comment>
<reference key="1">
    <citation type="submission" date="2007-03" db="EMBL/GenBank/DDBJ databases">
        <title>Sequencing analysis of Capsella bursa-pastoris JO22 chloroplast DNA.</title>
        <authorList>
            <person name="Hosouchi T."/>
            <person name="Tsuruoka H."/>
            <person name="Kotani H."/>
        </authorList>
    </citation>
    <scope>NUCLEOTIDE SEQUENCE [LARGE SCALE GENOMIC DNA]</scope>
</reference>
<accession>A4QKK6</accession>
<keyword id="KW-0150">Chloroplast</keyword>
<keyword id="KW-0472">Membrane</keyword>
<keyword id="KW-0602">Photosynthesis</keyword>
<keyword id="KW-0604">Photosystem II</keyword>
<keyword id="KW-0934">Plastid</keyword>
<keyword id="KW-0674">Reaction center</keyword>
<keyword id="KW-0793">Thylakoid</keyword>
<keyword id="KW-0812">Transmembrane</keyword>
<keyword id="KW-1133">Transmembrane helix</keyword>
<protein>
    <recommendedName>
        <fullName evidence="1">Photosystem II reaction center protein J</fullName>
        <shortName evidence="1">PSII-J</shortName>
    </recommendedName>
</protein>
<organism>
    <name type="scientific">Capsella bursa-pastoris</name>
    <name type="common">Shepherd's purse</name>
    <name type="synonym">Thlaspi bursa-pastoris</name>
    <dbReference type="NCBI Taxonomy" id="3719"/>
    <lineage>
        <taxon>Eukaryota</taxon>
        <taxon>Viridiplantae</taxon>
        <taxon>Streptophyta</taxon>
        <taxon>Embryophyta</taxon>
        <taxon>Tracheophyta</taxon>
        <taxon>Spermatophyta</taxon>
        <taxon>Magnoliopsida</taxon>
        <taxon>eudicotyledons</taxon>
        <taxon>Gunneridae</taxon>
        <taxon>Pentapetalae</taxon>
        <taxon>rosids</taxon>
        <taxon>malvids</taxon>
        <taxon>Brassicales</taxon>
        <taxon>Brassicaceae</taxon>
        <taxon>Camelineae</taxon>
        <taxon>Capsella</taxon>
    </lineage>
</organism>
<dbReference type="EMBL" id="AP009371">
    <property type="protein sequence ID" value="BAF50211.1"/>
    <property type="molecule type" value="Genomic_DNA"/>
</dbReference>
<dbReference type="RefSeq" id="YP_001123387.1">
    <property type="nucleotide sequence ID" value="NC_009270.1"/>
</dbReference>
<dbReference type="SMR" id="A4QKK6"/>
<dbReference type="GeneID" id="4961606"/>
<dbReference type="GO" id="GO:0009535">
    <property type="term" value="C:chloroplast thylakoid membrane"/>
    <property type="evidence" value="ECO:0007669"/>
    <property type="project" value="UniProtKB-SubCell"/>
</dbReference>
<dbReference type="GO" id="GO:0009539">
    <property type="term" value="C:photosystem II reaction center"/>
    <property type="evidence" value="ECO:0007669"/>
    <property type="project" value="InterPro"/>
</dbReference>
<dbReference type="GO" id="GO:0015979">
    <property type="term" value="P:photosynthesis"/>
    <property type="evidence" value="ECO:0007669"/>
    <property type="project" value="UniProtKB-UniRule"/>
</dbReference>
<dbReference type="Gene3D" id="6.10.250.2070">
    <property type="match status" value="1"/>
</dbReference>
<dbReference type="HAMAP" id="MF_01305">
    <property type="entry name" value="PSII_PsbJ"/>
    <property type="match status" value="1"/>
</dbReference>
<dbReference type="InterPro" id="IPR002682">
    <property type="entry name" value="PSII_PsbJ"/>
</dbReference>
<dbReference type="InterPro" id="IPR037267">
    <property type="entry name" value="PSII_PsbJ_sf"/>
</dbReference>
<dbReference type="NCBIfam" id="NF002722">
    <property type="entry name" value="PRK02565.1"/>
    <property type="match status" value="1"/>
</dbReference>
<dbReference type="PANTHER" id="PTHR34812">
    <property type="entry name" value="PHOTOSYSTEM II REACTION CENTER PROTEIN J"/>
    <property type="match status" value="1"/>
</dbReference>
<dbReference type="PANTHER" id="PTHR34812:SF3">
    <property type="entry name" value="PHOTOSYSTEM II REACTION CENTER PROTEIN J"/>
    <property type="match status" value="1"/>
</dbReference>
<dbReference type="Pfam" id="PF01788">
    <property type="entry name" value="PsbJ"/>
    <property type="match status" value="1"/>
</dbReference>
<dbReference type="SUPFAM" id="SSF161021">
    <property type="entry name" value="Photosystem II reaction center protein J, PsbJ"/>
    <property type="match status" value="1"/>
</dbReference>
<name>PSBJ_CAPBU</name>
<sequence>MADTTGRIPLWVIGTVAGIPVIGLIGIFFYGSYSGLGSSL</sequence>
<gene>
    <name evidence="1" type="primary">psbJ</name>
</gene>
<evidence type="ECO:0000255" key="1">
    <source>
        <dbReference type="HAMAP-Rule" id="MF_01305"/>
    </source>
</evidence>
<proteinExistence type="inferred from homology"/>
<geneLocation type="chloroplast"/>